<gene>
    <name evidence="7" type="primary">SBT</name>
</gene>
<sequence length="734" mass="77596">MTCICIFSIAFLLSFHLTTAQRSTGLQTYIVHVDKPDAQVLANSADLESYYNSFLPATVSGSEVPSRIIHSYHHVATGFAAKLSGEEVKEMEKKAGFVSAKLEKVLTLHTTHTPNFLGLYQNMGFWQESNYGKGVIIGLLDTGITPGHPSFSDVNMPSPPAKWKGKCEFTGNATCNKKIIGARNFISGSGVPPTDEEGHGTHTASTAAGNFVNDANVFGNANGTAVGMAPLAHIAMYKVCSEDGCSDADILAALDAAIDDGVDVLSLSLGGYSDPFYYDNIAIGAFAAIRKGIFVSASAGNDGPLNSTLSNEAPWILTVGASTHDRKIVATAVLGNGQQYDGESAFQPADFPHTLLPLVYPGTSDEEAAFCSSGSLDKFDVKGKVVVCDRGGDVARLEKSQTVKDAGGAAMILANLEIDGEGTFADAHVLPATHVGYAAGEMIKSYINSTSTPTAGILFKGTIIGFKSSPSVSSFSSRGPNLASPGIVKPDIIGPGVNILAAWPVSVENKTGTDLTFNIISGTSMSCPHLSGIVALLKSAHPDWSPAAIKSAIMTSADQSNLEGQPILDERNLPADIFATGAGHVNPSKASDPGLIYDIQLEDYIQYLCGLGYREKDIGLIVQETVKCESSISEAELNYPSFSIILGPKTQNYTRTVTNVGDASSTYTVNIAKTQGVDIVVEPATLVFTKMYQQATYTVSFTQSGDFTDRFVQGAISWSSNEYVVRSPISVKLE</sequence>
<accession>A0A0M3R8G2</accession>
<name>SBT_PETHY</name>
<organism>
    <name type="scientific">Petunia hybrida</name>
    <name type="common">Petunia</name>
    <dbReference type="NCBI Taxonomy" id="4102"/>
    <lineage>
        <taxon>Eukaryota</taxon>
        <taxon>Viridiplantae</taxon>
        <taxon>Streptophyta</taxon>
        <taxon>Embryophyta</taxon>
        <taxon>Tracheophyta</taxon>
        <taxon>Spermatophyta</taxon>
        <taxon>Magnoliopsida</taxon>
        <taxon>eudicotyledons</taxon>
        <taxon>Gunneridae</taxon>
        <taxon>Pentapetalae</taxon>
        <taxon>asterids</taxon>
        <taxon>lamiids</taxon>
        <taxon>Solanales</taxon>
        <taxon>Solanaceae</taxon>
        <taxon>Petunioideae</taxon>
        <taxon>Petunia</taxon>
    </lineage>
</organism>
<protein>
    <recommendedName>
        <fullName evidence="7">Subtilisin-like protease</fullName>
        <shortName evidence="7">Subtilase</shortName>
        <ecNumber evidence="5">3.4.21.-</ecNumber>
    </recommendedName>
</protein>
<proteinExistence type="evidence at transcript level"/>
<feature type="signal peptide" evidence="2">
    <location>
        <begin position="1"/>
        <end position="20"/>
    </location>
</feature>
<feature type="chain" id="PRO_5005788367" description="Subtilisin-like protease">
    <location>
        <begin position="21"/>
        <end position="734"/>
    </location>
</feature>
<feature type="domain" description="Inhibitor I9" evidence="2">
    <location>
        <begin position="28"/>
        <end position="109"/>
    </location>
</feature>
<feature type="domain" description="Peptidase S8" evidence="4">
    <location>
        <begin position="114"/>
        <end position="591"/>
    </location>
</feature>
<feature type="domain" description="PA" evidence="2">
    <location>
        <begin position="357"/>
        <end position="442"/>
    </location>
</feature>
<feature type="active site" description="Charge relay system" evidence="4 5">
    <location>
        <position position="141"/>
    </location>
</feature>
<feature type="active site" description="Charge relay system" evidence="4">
    <location>
        <position position="199"/>
    </location>
</feature>
<feature type="active site" description="Charge relay system" evidence="4">
    <location>
        <position position="524"/>
    </location>
</feature>
<feature type="glycosylation site" description="N-linked (GlcNAc...) asparagine" evidence="3">
    <location>
        <position position="172"/>
    </location>
</feature>
<feature type="glycosylation site" description="N-linked (GlcNAc...) asparagine" evidence="3">
    <location>
        <position position="222"/>
    </location>
</feature>
<feature type="glycosylation site" description="N-linked (GlcNAc...) asparagine" evidence="3">
    <location>
        <position position="306"/>
    </location>
</feature>
<feature type="glycosylation site" description="N-linked (GlcNAc...) asparagine" evidence="3">
    <location>
        <position position="448"/>
    </location>
</feature>
<feature type="glycosylation site" description="N-linked (GlcNAc...) asparagine" evidence="3">
    <location>
        <position position="509"/>
    </location>
</feature>
<feature type="glycosylation site" description="N-linked (GlcNAc...) asparagine" evidence="3">
    <location>
        <position position="652"/>
    </location>
</feature>
<reference key="1">
    <citation type="journal article" date="2015" name="Plant Physiol.">
        <title>The Petunia GRAS transcription factor ATA/RAM1 regulates symbiotic gene expression and fungal morphogenesis in arbuscular mycorrhiza.</title>
        <authorList>
            <person name="Rich M.K."/>
            <person name="Schorderet M."/>
            <person name="Bapaume L."/>
            <person name="Falquet L."/>
            <person name="Morel P."/>
            <person name="Vandenbussche M."/>
            <person name="Reinhardt D."/>
        </authorList>
    </citation>
    <scope>NUCLEOTIDE SEQUENCE [MRNA]</scope>
    <scope>INDUCTION BY RAM1 AND RHIZOPHAGUS IRREGULARIS</scope>
    <source>
        <strain>cv. W138</strain>
    </source>
</reference>
<comment type="function">
    <text evidence="1">Required for arbuscular mycorrhiza (AM) development during AM symbiosis with AM fungi (e.g. Glomeromycota intraradices).</text>
</comment>
<comment type="subcellular location">
    <subcellularLocation>
        <location evidence="1">Secreted</location>
        <location evidence="1">Extracellular space</location>
        <location evidence="1">Apoplast</location>
    </subcellularLocation>
    <text evidence="1">Accumulates in the intercellular spaces and the periarbuscular space (PAS) during arbuscular mycorrhizal (AM) symbiosis.</text>
</comment>
<comment type="induction">
    <text evidence="6">Regulated by RAM1 during arbuscular mycorrhiza (AM) formation after inoculation with Rhizophagus irregularis.</text>
</comment>
<comment type="similarity">
    <text evidence="4">Belongs to the peptidase S8 family.</text>
</comment>
<dbReference type="EC" id="3.4.21.-" evidence="5"/>
<dbReference type="EMBL" id="KR612269">
    <property type="protein sequence ID" value="ALC79559.1"/>
    <property type="molecule type" value="mRNA"/>
</dbReference>
<dbReference type="SMR" id="A0A0M3R8G2"/>
<dbReference type="GlyCosmos" id="A0A0M3R8G2">
    <property type="glycosylation" value="6 sites, No reported glycans"/>
</dbReference>
<dbReference type="GO" id="GO:0048046">
    <property type="term" value="C:apoplast"/>
    <property type="evidence" value="ECO:0000250"/>
    <property type="project" value="UniProtKB"/>
</dbReference>
<dbReference type="GO" id="GO:0005615">
    <property type="term" value="C:extracellular space"/>
    <property type="evidence" value="ECO:0000250"/>
    <property type="project" value="UniProtKB"/>
</dbReference>
<dbReference type="GO" id="GO:0004252">
    <property type="term" value="F:serine-type endopeptidase activity"/>
    <property type="evidence" value="ECO:0007669"/>
    <property type="project" value="InterPro"/>
</dbReference>
<dbReference type="GO" id="GO:0036377">
    <property type="term" value="P:arbuscular mycorrhizal association"/>
    <property type="evidence" value="ECO:0000250"/>
    <property type="project" value="UniProtKB"/>
</dbReference>
<dbReference type="GO" id="GO:0006508">
    <property type="term" value="P:proteolysis"/>
    <property type="evidence" value="ECO:0007669"/>
    <property type="project" value="UniProtKB-KW"/>
</dbReference>
<dbReference type="GO" id="GO:0009610">
    <property type="term" value="P:response to symbiotic fungus"/>
    <property type="evidence" value="ECO:0000270"/>
    <property type="project" value="UniProtKB"/>
</dbReference>
<dbReference type="CDD" id="cd02120">
    <property type="entry name" value="PA_subtilisin_like"/>
    <property type="match status" value="1"/>
</dbReference>
<dbReference type="CDD" id="cd04852">
    <property type="entry name" value="Peptidases_S8_3"/>
    <property type="match status" value="1"/>
</dbReference>
<dbReference type="FunFam" id="2.60.40.2310:FF:000001">
    <property type="entry name" value="Subtilisin-like protease SBT1.5"/>
    <property type="match status" value="1"/>
</dbReference>
<dbReference type="FunFam" id="3.40.50.200:FF:000006">
    <property type="entry name" value="Subtilisin-like protease SBT1.5"/>
    <property type="match status" value="1"/>
</dbReference>
<dbReference type="FunFam" id="3.50.30.30:FF:000005">
    <property type="entry name" value="subtilisin-like protease SBT1.5"/>
    <property type="match status" value="1"/>
</dbReference>
<dbReference type="Gene3D" id="2.60.40.2310">
    <property type="match status" value="1"/>
</dbReference>
<dbReference type="Gene3D" id="3.50.30.30">
    <property type="match status" value="1"/>
</dbReference>
<dbReference type="Gene3D" id="3.30.70.80">
    <property type="entry name" value="Peptidase S8 propeptide/proteinase inhibitor I9"/>
    <property type="match status" value="1"/>
</dbReference>
<dbReference type="Gene3D" id="3.40.50.200">
    <property type="entry name" value="Peptidase S8/S53 domain"/>
    <property type="match status" value="1"/>
</dbReference>
<dbReference type="InterPro" id="IPR046450">
    <property type="entry name" value="PA_dom_sf"/>
</dbReference>
<dbReference type="InterPro" id="IPR003137">
    <property type="entry name" value="PA_domain"/>
</dbReference>
<dbReference type="InterPro" id="IPR000209">
    <property type="entry name" value="Peptidase_S8/S53_dom"/>
</dbReference>
<dbReference type="InterPro" id="IPR036852">
    <property type="entry name" value="Peptidase_S8/S53_dom_sf"/>
</dbReference>
<dbReference type="InterPro" id="IPR023827">
    <property type="entry name" value="Peptidase_S8_Asp-AS"/>
</dbReference>
<dbReference type="InterPro" id="IPR015500">
    <property type="entry name" value="Peptidase_S8_subtilisin-rel"/>
</dbReference>
<dbReference type="InterPro" id="IPR034197">
    <property type="entry name" value="Peptidases_S8_3"/>
</dbReference>
<dbReference type="InterPro" id="IPR010259">
    <property type="entry name" value="S8pro/Inhibitor_I9"/>
</dbReference>
<dbReference type="InterPro" id="IPR037045">
    <property type="entry name" value="S8pro/Inhibitor_I9_sf"/>
</dbReference>
<dbReference type="InterPro" id="IPR045051">
    <property type="entry name" value="SBT"/>
</dbReference>
<dbReference type="InterPro" id="IPR041469">
    <property type="entry name" value="Subtilisin-like_FN3"/>
</dbReference>
<dbReference type="PANTHER" id="PTHR10795">
    <property type="entry name" value="PROPROTEIN CONVERTASE SUBTILISIN/KEXIN"/>
    <property type="match status" value="1"/>
</dbReference>
<dbReference type="Pfam" id="PF17766">
    <property type="entry name" value="fn3_6"/>
    <property type="match status" value="1"/>
</dbReference>
<dbReference type="Pfam" id="PF05922">
    <property type="entry name" value="Inhibitor_I9"/>
    <property type="match status" value="1"/>
</dbReference>
<dbReference type="Pfam" id="PF02225">
    <property type="entry name" value="PA"/>
    <property type="match status" value="1"/>
</dbReference>
<dbReference type="Pfam" id="PF00082">
    <property type="entry name" value="Peptidase_S8"/>
    <property type="match status" value="1"/>
</dbReference>
<dbReference type="PRINTS" id="PR00723">
    <property type="entry name" value="SUBTILISIN"/>
</dbReference>
<dbReference type="SUPFAM" id="SSF52025">
    <property type="entry name" value="PA domain"/>
    <property type="match status" value="1"/>
</dbReference>
<dbReference type="SUPFAM" id="SSF52743">
    <property type="entry name" value="Subtilisin-like"/>
    <property type="match status" value="1"/>
</dbReference>
<dbReference type="PROSITE" id="PS51892">
    <property type="entry name" value="SUBTILASE"/>
    <property type="match status" value="1"/>
</dbReference>
<dbReference type="PROSITE" id="PS00136">
    <property type="entry name" value="SUBTILASE_ASP"/>
    <property type="match status" value="1"/>
</dbReference>
<keyword id="KW-0052">Apoplast</keyword>
<keyword id="KW-0325">Glycoprotein</keyword>
<keyword id="KW-0378">Hydrolase</keyword>
<keyword id="KW-0645">Protease</keyword>
<keyword id="KW-0964">Secreted</keyword>
<keyword id="KW-0720">Serine protease</keyword>
<keyword id="KW-0732">Signal</keyword>
<evidence type="ECO:0000250" key="1">
    <source>
        <dbReference type="UniProtKB" id="A9QY40"/>
    </source>
</evidence>
<evidence type="ECO:0000255" key="2"/>
<evidence type="ECO:0000255" key="3">
    <source>
        <dbReference type="PROSITE-ProRule" id="PRU00498"/>
    </source>
</evidence>
<evidence type="ECO:0000255" key="4">
    <source>
        <dbReference type="PROSITE-ProRule" id="PRU01240"/>
    </source>
</evidence>
<evidence type="ECO:0000255" key="5">
    <source>
        <dbReference type="PROSITE-ProRule" id="PRU10080"/>
    </source>
</evidence>
<evidence type="ECO:0000269" key="6">
    <source>
    </source>
</evidence>
<evidence type="ECO:0000303" key="7">
    <source>
    </source>
</evidence>